<reference evidence="13" key="1">
    <citation type="submission" date="2020-03" db="EMBL/GenBank/DDBJ databases">
        <title>Genome sequence of Toxoplasma gondii RH-88 strain.</title>
        <authorList>
            <person name="Lorenzi H.A."/>
            <person name="Venepally P."/>
            <person name="Rozenberg A."/>
            <person name="Sibley D."/>
        </authorList>
    </citation>
    <scope>NUCLEOTIDE SEQUENCE [LARGE SCALE GENOMIC DNA]</scope>
    <source>
        <strain evidence="13">RH-88</strain>
    </source>
</reference>
<reference evidence="11" key="2">
    <citation type="journal article" date="2012" name="Science">
        <title>A DOC2 protein identified by mutational profiling is essential for apicomplexan parasite exocytosis.</title>
        <authorList>
            <person name="Farrell A."/>
            <person name="Thirugnanam S."/>
            <person name="Lorestani A."/>
            <person name="Dvorin J.D."/>
            <person name="Eidell K.P."/>
            <person name="Ferguson D.J."/>
            <person name="Anderson-White B.R."/>
            <person name="Duraisingh M.T."/>
            <person name="Marth G.T."/>
            <person name="Gubbels M.J."/>
        </authorList>
    </citation>
    <scope>FUNCTION</scope>
    <scope>MUTAGENESIS OF PHE-124</scope>
</reference>
<reference evidence="11" key="3">
    <citation type="journal article" date="2018" name="Front. Microbiol.">
        <title>Protective Efficacy Against Acute and Chronic Toxoplasma gondii Infection Induced by Immunization With the DNA Vaccine TgDOC2C.</title>
        <authorList>
            <person name="Zhang N.Z."/>
            <person name="Gao Q."/>
            <person name="Wang M."/>
            <person name="Hou J.L."/>
            <person name="Zhang F.K."/>
            <person name="Hu L.Y."/>
            <person name="Zhu X.Q."/>
        </authorList>
    </citation>
    <scope>VACCINE CANDIDATE</scope>
</reference>
<reference evidence="11" key="4">
    <citation type="journal article" date="2021" name="Life">
        <title>Ferlins and TgDOC2 in Toxoplasma Microneme, Rhoptry and Dense Granule Secretion.</title>
        <authorList>
            <person name="Tagoe D.N.A."/>
            <person name="Drozda A.A."/>
            <person name="Falco J.A."/>
            <person name="Bechtel T.J."/>
            <person name="Weerapana E."/>
            <person name="Gubbels M.J."/>
        </authorList>
    </citation>
    <scope>FUNCTION</scope>
    <source>
        <strain evidence="10">RH</strain>
    </source>
</reference>
<name>DOC2_TOXGO</name>
<sequence length="1910" mass="214963">MMKLKEMVEAAEAKVESKPPQAAEEKAPDQAAGGAEEDVAAAPAEGGEGAEPLDQAEIEKMLFDESLGAQEYTYEEFLDLIDQPPEERGEAEDERKHWSYPRRWKVVLWNLQIQNYMDDNFSAFMEFEFGGTREECKVHKGTSVLIYATGQDKNYLRTPVIPDVSNAGPVDMHFRKAFEYRGSYLDLEREKLKIKVWEYRNWTLNHLEAVYEEALLNLATGETHVERDLYKFIKGRRSRRCRISFHLYFQELYDFELSFVKWRLVQIMPCLTLQEKIANRGKNKGGYTREATIGFKRHQLADQAKYVFQQRQVKREMQKRDSQRELLPGASRPEMLGGFADKGSARLSHLGFESAMKLPNRGTRSPSGLESNRPEDGNRNMEEIFLQHQATILASDQLEELPASLRPPLSKRRKGEDKKDGNKADGPQVKMTISLMHASSMNKGLGLVSSERPADGIPRWDNLGEIYFRGTLRDLDSTYIQVVVEDTTAPKVMRQIGYGQIPLRGVVDYSCLSTELGTPMWLALQAKMEGWGHELKEWCFGFVEGTVMVAHLPRYRQLGEVSESDSDRVYLILRIKDVDQIVTPDNRPVVDSYVEVSFDGTSRRTRTVRNTLNPVWDDEVTIPLRLPAFRDITESDVTRKGKVWLDVWGTGPGYVDHLGGCSFSLYEIFFNEKHNKRNLTAMQRIDLEANTRQSYETRVFSTSRRLAFIHKADRPSTIQFEAWTCPDILEVSGIDKLPEPERITTTSNFPRALRNTYERLKRMYAEVIEKKGLVNPDTGVGPPRFFDVEFLDQRKETHYAPTMVTRIRPPFGVDSESSVFHYCRCVPFAVKRENLVFTPEFAVQIRSGNAMDHSILMTSLLLGLPAFAFVCVGTLWDKHMHAWVATFHYDDDRACGVVKFWETTTGLVYTLKHRFRDPYTLQRLSADPEFGILKMMNIQRRKRLSILGVSVDADTPDYISRSGEDLVQSEFPTGGAKLPYRSLDIMFNNRNVWLNIQDGNPAKVWFDIWDVEQWYQFSPGLHDVPPCFIVRGFGAKVAEWQFDRAAQEIQGKVLSDITAFRATRNLPTKWNRDDVLDAFLQMGLELLHQAATARDEDFQLARLKLEDWKKAFYSKVPCSYRVRGAPLHFNTYDSKTISDAIIANVDFVESRDRSAFFSLAVMLYNLPGELVSTYVYICVTQKVTERERRRILAQKEKQSREDAQRKARKQRRKAGHEGADNGAEDKQGAEGNEEEHGDAAAAAVAEESVSAEAVQGAEEPKKVVKKGAVPRVKKRSYEQVEGTEVAAIAIERDFFTEAEAPDFKNLMTDVEHAINTHLGLSPGRVRAFQARYAEKRIVFAVGPPMDDATEADAVSSVALMEKLRDILPSMAHEEGRFQEVTGGGATLQWDGPGTNILDRIAQEQATAGEGEQQTSEGIPTRDMQVDGTAVLEEAGEKSDKKKKKKEKKEKKEKKEKKEKKEKKEKKKKKGGETAAEPEEASAVLAPPPVPAPAAAIPSVLLPTDSEDGEKEKPKEKKKEKKEKKKKKDGETDAEPDEASAVLAPPPVPVPAAAIPSILLPADGEDGEEEKPKEKKTEKKKEKHTEKKHKKKSETLPESETTAVVTVTPGEEDETSPLVPVPSSIASSEAPEPPASTRVTPAPEPKAKPGLSMGAALLAVRARSRLQRKHLAQQLSSSSSSEVSASSASSLSPSSSSSSDFAETRAKADALRARLQAAQARLAAARETEVSSSETESSETSEASFLSSDGEWDALWQSQRAAAMERQQRLQKMVSGVKAAYRRLEEENTRLAATRRRDDKLQRQVEAERERAVELLKEATRRAKEEKDLIARQPPPARDWSDTVVLSTPQIFVNSQAACAPFADSGRDEGERDEWYEVSDACSRRAESSNESRTTAGAKLRQQQLDLAGRT</sequence>
<comment type="function">
    <text evidence="5 7">Regulates microneme secretion (PubMed:22246776, PubMed:33803212). Probably involved in regulation of rhoptry and dense granule secretion (PubMed:33803212).</text>
</comment>
<comment type="subcellular location">
    <subcellularLocation>
        <location evidence="1">Membrane</location>
        <topology evidence="1">Peripheral membrane protein</topology>
    </subcellularLocation>
</comment>
<comment type="miscellaneous">
    <text evidence="6">Vaccination of mice against the protein elicits humoral and cellular immune responses and contributes to a prolonged survival time during acute infection and a decrease in brain cysts during chronic Toxoplasma infection.</text>
</comment>
<keyword id="KW-0175">Coiled coil</keyword>
<keyword id="KW-0268">Exocytosis</keyword>
<keyword id="KW-0472">Membrane</keyword>
<keyword id="KW-1185">Reference proteome</keyword>
<organism evidence="13">
    <name type="scientific">Toxoplasma gondii</name>
    <dbReference type="NCBI Taxonomy" id="5811"/>
    <lineage>
        <taxon>Eukaryota</taxon>
        <taxon>Sar</taxon>
        <taxon>Alveolata</taxon>
        <taxon>Apicomplexa</taxon>
        <taxon>Conoidasida</taxon>
        <taxon>Coccidia</taxon>
        <taxon>Eucoccidiorida</taxon>
        <taxon>Eimeriorina</taxon>
        <taxon>Sarcocystidae</taxon>
        <taxon>Toxoplasma</taxon>
    </lineage>
</organism>
<dbReference type="EMBL" id="JAAUHK010000192">
    <property type="protein sequence ID" value="KAF4643359.1"/>
    <property type="molecule type" value="Genomic_DNA"/>
</dbReference>
<dbReference type="VEuPathDB" id="ToxoDB:TGME49_240910"/>
<dbReference type="Proteomes" id="UP000557509">
    <property type="component" value="Unassembled WGS sequence"/>
</dbReference>
<dbReference type="GO" id="GO:0016020">
    <property type="term" value="C:membrane"/>
    <property type="evidence" value="ECO:0007669"/>
    <property type="project" value="UniProtKB-SubCell"/>
</dbReference>
<dbReference type="GO" id="GO:0006887">
    <property type="term" value="P:exocytosis"/>
    <property type="evidence" value="ECO:0007669"/>
    <property type="project" value="UniProtKB-KW"/>
</dbReference>
<dbReference type="CDD" id="cd00030">
    <property type="entry name" value="C2"/>
    <property type="match status" value="1"/>
</dbReference>
<dbReference type="Gene3D" id="2.60.40.150">
    <property type="entry name" value="C2 domain"/>
    <property type="match status" value="1"/>
</dbReference>
<dbReference type="InterPro" id="IPR000008">
    <property type="entry name" value="C2_dom"/>
</dbReference>
<dbReference type="InterPro" id="IPR035892">
    <property type="entry name" value="C2_domain_sf"/>
</dbReference>
<dbReference type="InterPro" id="IPR052299">
    <property type="entry name" value="CEP76"/>
</dbReference>
<dbReference type="InterPro" id="IPR056288">
    <property type="entry name" value="CEP76_C"/>
</dbReference>
<dbReference type="InterPro" id="IPR056290">
    <property type="entry name" value="CEPT76/DRC7_peptidase-like_dom"/>
</dbReference>
<dbReference type="PANTHER" id="PTHR46436">
    <property type="entry name" value="CENTROSOMAL PROTEIN OF 76 KDA"/>
    <property type="match status" value="1"/>
</dbReference>
<dbReference type="PANTHER" id="PTHR46436:SF2">
    <property type="entry name" value="CHROMOSOME UNDETERMINED SCAFFOLD_119, WHOLE GENOME SHOTGUN SEQUENCE"/>
    <property type="match status" value="1"/>
</dbReference>
<dbReference type="Pfam" id="PF00168">
    <property type="entry name" value="C2"/>
    <property type="match status" value="1"/>
</dbReference>
<dbReference type="Pfam" id="PF24652">
    <property type="entry name" value="CEP76_C"/>
    <property type="match status" value="1"/>
</dbReference>
<dbReference type="Pfam" id="PF24656">
    <property type="entry name" value="CEPT76_peptidase"/>
    <property type="match status" value="1"/>
</dbReference>
<dbReference type="SMART" id="SM00239">
    <property type="entry name" value="C2"/>
    <property type="match status" value="1"/>
</dbReference>
<dbReference type="SUPFAM" id="SSF49562">
    <property type="entry name" value="C2 domain (Calcium/lipid-binding domain, CaLB)"/>
    <property type="match status" value="1"/>
</dbReference>
<dbReference type="PROSITE" id="PS50004">
    <property type="entry name" value="C2"/>
    <property type="match status" value="1"/>
</dbReference>
<protein>
    <recommendedName>
        <fullName evidence="11">C2 domain-containing protein</fullName>
        <shortName evidence="9 10">TgDOC2</shortName>
        <shortName evidence="8">TgDOC2.1</shortName>
    </recommendedName>
</protein>
<evidence type="ECO:0000250" key="1">
    <source>
        <dbReference type="UniProtKB" id="Q8I4Z1"/>
    </source>
</evidence>
<evidence type="ECO:0000255" key="2"/>
<evidence type="ECO:0000255" key="3">
    <source>
        <dbReference type="PROSITE-ProRule" id="PRU00041"/>
    </source>
</evidence>
<evidence type="ECO:0000256" key="4">
    <source>
        <dbReference type="SAM" id="MobiDB-lite"/>
    </source>
</evidence>
<evidence type="ECO:0000269" key="5">
    <source>
    </source>
</evidence>
<evidence type="ECO:0000269" key="6">
    <source>
    </source>
</evidence>
<evidence type="ECO:0000269" key="7">
    <source>
    </source>
</evidence>
<evidence type="ECO:0000303" key="8">
    <source>
    </source>
</evidence>
<evidence type="ECO:0000303" key="9">
    <source>
    </source>
</evidence>
<evidence type="ECO:0000303" key="10">
    <source>
    </source>
</evidence>
<evidence type="ECO:0000305" key="11"/>
<evidence type="ECO:0000312" key="12">
    <source>
        <dbReference type="EMBL" id="KAF4643359.1"/>
    </source>
</evidence>
<evidence type="ECO:0000312" key="13">
    <source>
        <dbReference type="Proteomes" id="UP000557509"/>
    </source>
</evidence>
<accession>A0A7J6K9S4</accession>
<feature type="chain" id="PRO_0000461789" description="C2 domain-containing protein">
    <location>
        <begin position="1"/>
        <end position="1910"/>
    </location>
</feature>
<feature type="domain" description="C2" evidence="3">
    <location>
        <begin position="557"/>
        <end position="678"/>
    </location>
</feature>
<feature type="region of interest" description="Disordered" evidence="4">
    <location>
        <begin position="1"/>
        <end position="54"/>
    </location>
</feature>
<feature type="region of interest" description="Disordered" evidence="4">
    <location>
        <begin position="355"/>
        <end position="377"/>
    </location>
</feature>
<feature type="region of interest" description="Disordered" evidence="4">
    <location>
        <begin position="398"/>
        <end position="428"/>
    </location>
</feature>
<feature type="region of interest" description="Disordered" evidence="4">
    <location>
        <begin position="1192"/>
        <end position="1267"/>
    </location>
</feature>
<feature type="region of interest" description="Disordered" evidence="4">
    <location>
        <begin position="1405"/>
        <end position="1424"/>
    </location>
</feature>
<feature type="region of interest" description="Disordered" evidence="4">
    <location>
        <begin position="1431"/>
        <end position="1654"/>
    </location>
</feature>
<feature type="region of interest" description="Disordered" evidence="4">
    <location>
        <begin position="1666"/>
        <end position="1747"/>
    </location>
</feature>
<feature type="region of interest" description="Disordered" evidence="4">
    <location>
        <begin position="1822"/>
        <end position="1841"/>
    </location>
</feature>
<feature type="region of interest" description="Disordered" evidence="4">
    <location>
        <begin position="1879"/>
        <end position="1910"/>
    </location>
</feature>
<feature type="coiled-coil region" evidence="2">
    <location>
        <begin position="1766"/>
        <end position="1828"/>
    </location>
</feature>
<feature type="compositionally biased region" description="Basic and acidic residues" evidence="4">
    <location>
        <begin position="1"/>
        <end position="28"/>
    </location>
</feature>
<feature type="compositionally biased region" description="Basic and acidic residues" evidence="4">
    <location>
        <begin position="414"/>
        <end position="423"/>
    </location>
</feature>
<feature type="compositionally biased region" description="Basic and acidic residues" evidence="4">
    <location>
        <begin position="1192"/>
        <end position="1205"/>
    </location>
</feature>
<feature type="compositionally biased region" description="Basic and acidic residues" evidence="4">
    <location>
        <begin position="1215"/>
        <end position="1228"/>
    </location>
</feature>
<feature type="compositionally biased region" description="Low complexity" evidence="4">
    <location>
        <begin position="1239"/>
        <end position="1257"/>
    </location>
</feature>
<feature type="compositionally biased region" description="Low complexity" evidence="4">
    <location>
        <begin position="1405"/>
        <end position="1414"/>
    </location>
</feature>
<feature type="compositionally biased region" description="Basic residues" evidence="4">
    <location>
        <begin position="1440"/>
        <end position="1469"/>
    </location>
</feature>
<feature type="compositionally biased region" description="Low complexity" evidence="4">
    <location>
        <begin position="1492"/>
        <end position="1502"/>
    </location>
</feature>
<feature type="compositionally biased region" description="Basic residues" evidence="4">
    <location>
        <begin position="1517"/>
        <end position="1526"/>
    </location>
</feature>
<feature type="compositionally biased region" description="Low complexity" evidence="4">
    <location>
        <begin position="1550"/>
        <end position="1561"/>
    </location>
</feature>
<feature type="compositionally biased region" description="Basic and acidic residues" evidence="4">
    <location>
        <begin position="1569"/>
        <end position="1584"/>
    </location>
</feature>
<feature type="compositionally biased region" description="Polar residues" evidence="4">
    <location>
        <begin position="1595"/>
        <end position="1604"/>
    </location>
</feature>
<feature type="compositionally biased region" description="Low complexity" evidence="4">
    <location>
        <begin position="1620"/>
        <end position="1629"/>
    </location>
</feature>
<feature type="compositionally biased region" description="Low complexity" evidence="4">
    <location>
        <begin position="1675"/>
        <end position="1698"/>
    </location>
</feature>
<feature type="compositionally biased region" description="Basic and acidic residues" evidence="4">
    <location>
        <begin position="1701"/>
        <end position="1711"/>
    </location>
</feature>
<feature type="compositionally biased region" description="Low complexity" evidence="4">
    <location>
        <begin position="1712"/>
        <end position="1722"/>
    </location>
</feature>
<feature type="compositionally biased region" description="Low complexity" evidence="4">
    <location>
        <begin position="1729"/>
        <end position="1747"/>
    </location>
</feature>
<feature type="compositionally biased region" description="Polar residues" evidence="4">
    <location>
        <begin position="1890"/>
        <end position="1904"/>
    </location>
</feature>
<feature type="mutagenesis site" description="Results in impaired host cell invasion and egress due to defects in microneme secretion." evidence="5">
    <original>F</original>
    <variation>S</variation>
    <location>
        <position position="124"/>
    </location>
</feature>
<gene>
    <name evidence="12" type="ORF">TGRH88_030250</name>
</gene>
<proteinExistence type="evidence at protein level"/>